<protein>
    <recommendedName>
        <fullName evidence="1">UPF0397 protein BCAH187_A2708</fullName>
    </recommendedName>
</protein>
<name>Y2708_BACC7</name>
<accession>B7HSG9</accession>
<keyword id="KW-1003">Cell membrane</keyword>
<keyword id="KW-0472">Membrane</keyword>
<keyword id="KW-0812">Transmembrane</keyword>
<keyword id="KW-1133">Transmembrane helix</keyword>
<organism>
    <name type="scientific">Bacillus cereus (strain AH187)</name>
    <dbReference type="NCBI Taxonomy" id="405534"/>
    <lineage>
        <taxon>Bacteria</taxon>
        <taxon>Bacillati</taxon>
        <taxon>Bacillota</taxon>
        <taxon>Bacilli</taxon>
        <taxon>Bacillales</taxon>
        <taxon>Bacillaceae</taxon>
        <taxon>Bacillus</taxon>
        <taxon>Bacillus cereus group</taxon>
    </lineage>
</organism>
<gene>
    <name type="ordered locus">BCAH187_A2708</name>
</gene>
<dbReference type="EMBL" id="CP001177">
    <property type="protein sequence ID" value="ACJ80092.1"/>
    <property type="molecule type" value="Genomic_DNA"/>
</dbReference>
<dbReference type="SMR" id="B7HSG9"/>
<dbReference type="KEGG" id="bcr:BCAH187_A2708"/>
<dbReference type="HOGENOM" id="CLU_120023_0_0_9"/>
<dbReference type="Proteomes" id="UP000002214">
    <property type="component" value="Chromosome"/>
</dbReference>
<dbReference type="GO" id="GO:0005886">
    <property type="term" value="C:plasma membrane"/>
    <property type="evidence" value="ECO:0007669"/>
    <property type="project" value="UniProtKB-SubCell"/>
</dbReference>
<dbReference type="Gene3D" id="1.10.1760.20">
    <property type="match status" value="1"/>
</dbReference>
<dbReference type="HAMAP" id="MF_01572">
    <property type="entry name" value="UPF0397"/>
    <property type="match status" value="1"/>
</dbReference>
<dbReference type="InterPro" id="IPR009825">
    <property type="entry name" value="ECF_substrate-spec-like"/>
</dbReference>
<dbReference type="InterPro" id="IPR022914">
    <property type="entry name" value="UPF0397"/>
</dbReference>
<dbReference type="NCBIfam" id="NF010182">
    <property type="entry name" value="PRK13661.1"/>
    <property type="match status" value="1"/>
</dbReference>
<dbReference type="PANTHER" id="PTHR37815">
    <property type="entry name" value="UPF0397 PROTEIN BC_2624-RELATED"/>
    <property type="match status" value="1"/>
</dbReference>
<dbReference type="PANTHER" id="PTHR37815:SF3">
    <property type="entry name" value="UPF0397 PROTEIN SPR0429"/>
    <property type="match status" value="1"/>
</dbReference>
<dbReference type="Pfam" id="PF07155">
    <property type="entry name" value="ECF-ribofla_trS"/>
    <property type="match status" value="1"/>
</dbReference>
<comment type="subcellular location">
    <subcellularLocation>
        <location evidence="1">Cell membrane</location>
        <topology evidence="1">Multi-pass membrane protein</topology>
    </subcellularLocation>
</comment>
<comment type="similarity">
    <text evidence="1">Belongs to the UPF0397 family.</text>
</comment>
<reference key="1">
    <citation type="submission" date="2008-10" db="EMBL/GenBank/DDBJ databases">
        <title>Genome sequence of Bacillus cereus AH187.</title>
        <authorList>
            <person name="Dodson R.J."/>
            <person name="Durkin A.S."/>
            <person name="Rosovitz M.J."/>
            <person name="Rasko D.A."/>
            <person name="Kolsto A.B."/>
            <person name="Okstad O.A."/>
            <person name="Ravel J."/>
            <person name="Sutton G."/>
        </authorList>
    </citation>
    <scope>NUCLEOTIDE SEQUENCE [LARGE SCALE GENOMIC DNA]</scope>
    <source>
        <strain>AH187</strain>
    </source>
</reference>
<feature type="chain" id="PRO_1000200757" description="UPF0397 protein BCAH187_A2708">
    <location>
        <begin position="1"/>
        <end position="182"/>
    </location>
</feature>
<feature type="transmembrane region" description="Helical" evidence="1">
    <location>
        <begin position="9"/>
        <end position="29"/>
    </location>
</feature>
<feature type="transmembrane region" description="Helical" evidence="1">
    <location>
        <begin position="40"/>
        <end position="60"/>
    </location>
</feature>
<feature type="transmembrane region" description="Helical" evidence="1">
    <location>
        <begin position="71"/>
        <end position="91"/>
    </location>
</feature>
<feature type="transmembrane region" description="Helical" evidence="1">
    <location>
        <begin position="114"/>
        <end position="134"/>
    </location>
</feature>
<feature type="transmembrane region" description="Helical" evidence="1">
    <location>
        <begin position="142"/>
        <end position="162"/>
    </location>
</feature>
<sequence>MNKLSTKLVVAIGIGAALYGILGLWGFSIAPNTFIKPALAILTVFGALFGPVAGLLIGLIGHTVTDTIAGWGIWWGWVISSGIIGFAMGFIQKRVGFSVKNGTYNKGDISYLAITGLIGIVIAIIFAGAFDIIVMGEPFDKIVIQVLGATIADVIVFLVLGLPITIGLAKSNKKHTHLKIEK</sequence>
<evidence type="ECO:0000255" key="1">
    <source>
        <dbReference type="HAMAP-Rule" id="MF_01572"/>
    </source>
</evidence>
<proteinExistence type="inferred from homology"/>